<dbReference type="EMBL" id="Z70722">
    <property type="protein sequence ID" value="CAA94716.1"/>
    <property type="molecule type" value="Genomic_DNA"/>
</dbReference>
<dbReference type="EMBL" id="AL583917">
    <property type="protein sequence ID" value="CAC29536.1"/>
    <property type="status" value="ALT_INIT"/>
    <property type="molecule type" value="Genomic_DNA"/>
</dbReference>
<dbReference type="PIR" id="D86912">
    <property type="entry name" value="D86912"/>
</dbReference>
<dbReference type="PIR" id="T10016">
    <property type="entry name" value="T10016"/>
</dbReference>
<dbReference type="SMR" id="Q50191"/>
<dbReference type="STRING" id="272631.gene:17573840"/>
<dbReference type="KEGG" id="mle:ML0028"/>
<dbReference type="Leproma" id="ML0028"/>
<dbReference type="eggNOG" id="COG1678">
    <property type="taxonomic scope" value="Bacteria"/>
</dbReference>
<dbReference type="HOGENOM" id="CLU_057596_2_0_11"/>
<dbReference type="Proteomes" id="UP000000806">
    <property type="component" value="Chromosome"/>
</dbReference>
<dbReference type="GO" id="GO:0005829">
    <property type="term" value="C:cytosol"/>
    <property type="evidence" value="ECO:0007669"/>
    <property type="project" value="TreeGrafter"/>
</dbReference>
<dbReference type="Gene3D" id="3.40.1740.10">
    <property type="entry name" value="VC0467-like"/>
    <property type="match status" value="1"/>
</dbReference>
<dbReference type="HAMAP" id="MF_00758">
    <property type="entry name" value="UPF0301"/>
    <property type="match status" value="1"/>
</dbReference>
<dbReference type="InterPro" id="IPR003774">
    <property type="entry name" value="AlgH-like"/>
</dbReference>
<dbReference type="NCBIfam" id="NF001269">
    <property type="entry name" value="PRK00228.2-1"/>
    <property type="match status" value="1"/>
</dbReference>
<dbReference type="NCBIfam" id="NF001272">
    <property type="entry name" value="PRK00228.2-4"/>
    <property type="match status" value="1"/>
</dbReference>
<dbReference type="PANTHER" id="PTHR30327">
    <property type="entry name" value="UNCHARACTERIZED PROTEIN YQGE"/>
    <property type="match status" value="1"/>
</dbReference>
<dbReference type="PANTHER" id="PTHR30327:SF1">
    <property type="entry name" value="UPF0301 PROTEIN YQGE"/>
    <property type="match status" value="1"/>
</dbReference>
<dbReference type="Pfam" id="PF02622">
    <property type="entry name" value="DUF179"/>
    <property type="match status" value="1"/>
</dbReference>
<dbReference type="SUPFAM" id="SSF143456">
    <property type="entry name" value="VC0467-like"/>
    <property type="match status" value="1"/>
</dbReference>
<protein>
    <recommendedName>
        <fullName>UPF0301 protein ML0028</fullName>
    </recommendedName>
</protein>
<name>Y028_MYCLE</name>
<reference key="1">
    <citation type="journal article" date="1996" name="Microbiology">
        <title>Gene arrangement and organization in an approximately 76 kb fragment encompassing the oriC region of the chromosome of Mycobacterium leprae.</title>
        <authorList>
            <person name="Fsihi H."/>
            <person name="de Rossi E."/>
            <person name="Salazar L."/>
            <person name="Cantoni R."/>
            <person name="Labo M."/>
            <person name="Riccardi G."/>
            <person name="Takiff H.E."/>
            <person name="Eiglmeier K."/>
            <person name="Bergh S."/>
            <person name="Cole S.T."/>
        </authorList>
    </citation>
    <scope>NUCLEOTIDE SEQUENCE [GENOMIC DNA]</scope>
</reference>
<reference key="2">
    <citation type="journal article" date="2001" name="Nature">
        <title>Massive gene decay in the leprosy bacillus.</title>
        <authorList>
            <person name="Cole S.T."/>
            <person name="Eiglmeier K."/>
            <person name="Parkhill J."/>
            <person name="James K.D."/>
            <person name="Thomson N.R."/>
            <person name="Wheeler P.R."/>
            <person name="Honore N."/>
            <person name="Garnier T."/>
            <person name="Churcher C.M."/>
            <person name="Harris D.E."/>
            <person name="Mungall K.L."/>
            <person name="Basham D."/>
            <person name="Brown D."/>
            <person name="Chillingworth T."/>
            <person name="Connor R."/>
            <person name="Davies R.M."/>
            <person name="Devlin K."/>
            <person name="Duthoy S."/>
            <person name="Feltwell T."/>
            <person name="Fraser A."/>
            <person name="Hamlin N."/>
            <person name="Holroyd S."/>
            <person name="Hornsby T."/>
            <person name="Jagels K."/>
            <person name="Lacroix C."/>
            <person name="Maclean J."/>
            <person name="Moule S."/>
            <person name="Murphy L.D."/>
            <person name="Oliver K."/>
            <person name="Quail M.A."/>
            <person name="Rajandream M.A."/>
            <person name="Rutherford K.M."/>
            <person name="Rutter S."/>
            <person name="Seeger K."/>
            <person name="Simon S."/>
            <person name="Simmonds M."/>
            <person name="Skelton J."/>
            <person name="Squares R."/>
            <person name="Squares S."/>
            <person name="Stevens K."/>
            <person name="Taylor K."/>
            <person name="Whitehead S."/>
            <person name="Woodward J.R."/>
            <person name="Barrell B.G."/>
        </authorList>
    </citation>
    <scope>NUCLEOTIDE SEQUENCE [LARGE SCALE GENOMIC DNA]</scope>
    <source>
        <strain>TN</strain>
    </source>
</reference>
<accession>Q50191</accession>
<sequence>MVIRPEDPEDYVAPAAQRVRAGTLLLANTDLLEPTFRRSVIYIVEHNEGGTLGVVLNRPSETAVYNVLPQWAKLAAKPKTMFIGGPVKRDAALCLAVLRIGADPDGVAGLRHVAGRLVMVDLDAEPDLIAPLVDGLRIFVGYSGWTIGQLKGEIERDDWIVLSALPSDVLVGKRADLWAQVLRRQPLLLSLLATHPIDVSRN</sequence>
<gene>
    <name type="ordered locus">ML0028</name>
</gene>
<comment type="similarity">
    <text evidence="1">Belongs to the UPF0301 (AlgH) family.</text>
</comment>
<comment type="sequence caution" evidence="1">
    <conflict type="erroneous initiation">
        <sequence resource="EMBL-CDS" id="CAC29536"/>
    </conflict>
</comment>
<keyword id="KW-1185">Reference proteome</keyword>
<evidence type="ECO:0000305" key="1"/>
<feature type="chain" id="PRO_0000214328" description="UPF0301 protein ML0028">
    <location>
        <begin position="1"/>
        <end position="202"/>
    </location>
</feature>
<proteinExistence type="inferred from homology"/>
<organism>
    <name type="scientific">Mycobacterium leprae (strain TN)</name>
    <dbReference type="NCBI Taxonomy" id="272631"/>
    <lineage>
        <taxon>Bacteria</taxon>
        <taxon>Bacillati</taxon>
        <taxon>Actinomycetota</taxon>
        <taxon>Actinomycetes</taxon>
        <taxon>Mycobacteriales</taxon>
        <taxon>Mycobacteriaceae</taxon>
        <taxon>Mycobacterium</taxon>
    </lineage>
</organism>